<reference key="1">
    <citation type="journal article" date="2004" name="Nat. Biotechnol.">
        <title>Complete sequence and comparative genome analysis of the dairy bacterium Streptococcus thermophilus.</title>
        <authorList>
            <person name="Bolotin A."/>
            <person name="Quinquis B."/>
            <person name="Renault P."/>
            <person name="Sorokin A."/>
            <person name="Ehrlich S.D."/>
            <person name="Kulakauskas S."/>
            <person name="Lapidus A."/>
            <person name="Goltsman E."/>
            <person name="Mazur M."/>
            <person name="Pusch G.D."/>
            <person name="Fonstein M."/>
            <person name="Overbeek R."/>
            <person name="Kyprides N."/>
            <person name="Purnelle B."/>
            <person name="Prozzi D."/>
            <person name="Ngui K."/>
            <person name="Masuy D."/>
            <person name="Hancy F."/>
            <person name="Burteau S."/>
            <person name="Boutry M."/>
            <person name="Delcour J."/>
            <person name="Goffeau A."/>
            <person name="Hols P."/>
        </authorList>
    </citation>
    <scope>NUCLEOTIDE SEQUENCE [LARGE SCALE GENOMIC DNA]</scope>
    <source>
        <strain>ATCC BAA-250 / LMG 18311</strain>
    </source>
</reference>
<name>SERC_STRT2</name>
<comment type="function">
    <text evidence="1">Catalyzes the reversible conversion of 3-phosphohydroxypyruvate to phosphoserine and of 3-hydroxy-2-oxo-4-phosphonooxybutanoate to phosphohydroxythreonine.</text>
</comment>
<comment type="catalytic activity">
    <reaction evidence="1">
        <text>O-phospho-L-serine + 2-oxoglutarate = 3-phosphooxypyruvate + L-glutamate</text>
        <dbReference type="Rhea" id="RHEA:14329"/>
        <dbReference type="ChEBI" id="CHEBI:16810"/>
        <dbReference type="ChEBI" id="CHEBI:18110"/>
        <dbReference type="ChEBI" id="CHEBI:29985"/>
        <dbReference type="ChEBI" id="CHEBI:57524"/>
        <dbReference type="EC" id="2.6.1.52"/>
    </reaction>
</comment>
<comment type="catalytic activity">
    <reaction evidence="1">
        <text>4-(phosphooxy)-L-threonine + 2-oxoglutarate = (R)-3-hydroxy-2-oxo-4-phosphooxybutanoate + L-glutamate</text>
        <dbReference type="Rhea" id="RHEA:16573"/>
        <dbReference type="ChEBI" id="CHEBI:16810"/>
        <dbReference type="ChEBI" id="CHEBI:29985"/>
        <dbReference type="ChEBI" id="CHEBI:58452"/>
        <dbReference type="ChEBI" id="CHEBI:58538"/>
        <dbReference type="EC" id="2.6.1.52"/>
    </reaction>
</comment>
<comment type="cofactor">
    <cofactor evidence="1">
        <name>pyridoxal 5'-phosphate</name>
        <dbReference type="ChEBI" id="CHEBI:597326"/>
    </cofactor>
    <text evidence="1">Binds 1 pyridoxal phosphate per subunit.</text>
</comment>
<comment type="pathway">
    <text evidence="1">Amino-acid biosynthesis; L-serine biosynthesis; L-serine from 3-phospho-D-glycerate: step 2/3.</text>
</comment>
<comment type="subunit">
    <text evidence="1">Homodimer.</text>
</comment>
<comment type="subcellular location">
    <subcellularLocation>
        <location evidence="1">Cytoplasm</location>
    </subcellularLocation>
</comment>
<comment type="similarity">
    <text evidence="1">Belongs to the class-V pyridoxal-phosphate-dependent aminotransferase family. SerC subfamily.</text>
</comment>
<accession>Q5M3A4</accession>
<protein>
    <recommendedName>
        <fullName evidence="1">Phosphoserine aminotransferase</fullName>
        <ecNumber evidence="1">2.6.1.52</ecNumber>
    </recommendedName>
    <alternativeName>
        <fullName evidence="1">Phosphohydroxythreonine aminotransferase</fullName>
        <shortName evidence="1">PSAT</shortName>
    </alternativeName>
</protein>
<feature type="chain" id="PRO_0000150213" description="Phosphoserine aminotransferase">
    <location>
        <begin position="1"/>
        <end position="364"/>
    </location>
</feature>
<feature type="binding site" evidence="1">
    <location>
        <position position="41"/>
    </location>
    <ligand>
        <name>L-glutamate</name>
        <dbReference type="ChEBI" id="CHEBI:29985"/>
    </ligand>
</feature>
<feature type="binding site" evidence="1">
    <location>
        <begin position="75"/>
        <end position="76"/>
    </location>
    <ligand>
        <name>pyridoxal 5'-phosphate</name>
        <dbReference type="ChEBI" id="CHEBI:597326"/>
    </ligand>
</feature>
<feature type="binding site" evidence="1">
    <location>
        <position position="100"/>
    </location>
    <ligand>
        <name>pyridoxal 5'-phosphate</name>
        <dbReference type="ChEBI" id="CHEBI:597326"/>
    </ligand>
</feature>
<feature type="binding site" evidence="1">
    <location>
        <position position="155"/>
    </location>
    <ligand>
        <name>pyridoxal 5'-phosphate</name>
        <dbReference type="ChEBI" id="CHEBI:597326"/>
    </ligand>
</feature>
<feature type="binding site" evidence="1">
    <location>
        <position position="198"/>
    </location>
    <ligand>
        <name>pyridoxal 5'-phosphate</name>
        <dbReference type="ChEBI" id="CHEBI:597326"/>
    </ligand>
</feature>
<feature type="binding site" evidence="1">
    <location>
        <begin position="239"/>
        <end position="240"/>
    </location>
    <ligand>
        <name>pyridoxal 5'-phosphate</name>
        <dbReference type="ChEBI" id="CHEBI:597326"/>
    </ligand>
</feature>
<feature type="modified residue" description="N6-(pyridoxal phosphate)lysine" evidence="1">
    <location>
        <position position="199"/>
    </location>
</feature>
<keyword id="KW-0028">Amino-acid biosynthesis</keyword>
<keyword id="KW-0032">Aminotransferase</keyword>
<keyword id="KW-0963">Cytoplasm</keyword>
<keyword id="KW-0663">Pyridoxal phosphate</keyword>
<keyword id="KW-0664">Pyridoxine biosynthesis</keyword>
<keyword id="KW-1185">Reference proteome</keyword>
<keyword id="KW-0718">Serine biosynthesis</keyword>
<keyword id="KW-0808">Transferase</keyword>
<proteinExistence type="inferred from homology"/>
<organism>
    <name type="scientific">Streptococcus thermophilus (strain ATCC BAA-250 / LMG 18311)</name>
    <dbReference type="NCBI Taxonomy" id="264199"/>
    <lineage>
        <taxon>Bacteria</taxon>
        <taxon>Bacillati</taxon>
        <taxon>Bacillota</taxon>
        <taxon>Bacilli</taxon>
        <taxon>Lactobacillales</taxon>
        <taxon>Streptococcaceae</taxon>
        <taxon>Streptococcus</taxon>
    </lineage>
</organism>
<dbReference type="EC" id="2.6.1.52" evidence="1"/>
<dbReference type="EMBL" id="CP000023">
    <property type="protein sequence ID" value="AAV61132.1"/>
    <property type="molecule type" value="Genomic_DNA"/>
</dbReference>
<dbReference type="RefSeq" id="WP_011226373.1">
    <property type="nucleotide sequence ID" value="NC_006448.1"/>
</dbReference>
<dbReference type="SMR" id="Q5M3A4"/>
<dbReference type="STRING" id="264199.stu1529"/>
<dbReference type="KEGG" id="stl:stu1529"/>
<dbReference type="PATRIC" id="fig|264199.4.peg.1498"/>
<dbReference type="eggNOG" id="COG1932">
    <property type="taxonomic scope" value="Bacteria"/>
</dbReference>
<dbReference type="HOGENOM" id="CLU_034866_0_2_9"/>
<dbReference type="UniPathway" id="UPA00135">
    <property type="reaction ID" value="UER00197"/>
</dbReference>
<dbReference type="Proteomes" id="UP000001170">
    <property type="component" value="Chromosome"/>
</dbReference>
<dbReference type="GO" id="GO:0005737">
    <property type="term" value="C:cytoplasm"/>
    <property type="evidence" value="ECO:0007669"/>
    <property type="project" value="UniProtKB-SubCell"/>
</dbReference>
<dbReference type="GO" id="GO:0004648">
    <property type="term" value="F:O-phospho-L-serine:2-oxoglutarate aminotransferase activity"/>
    <property type="evidence" value="ECO:0007669"/>
    <property type="project" value="UniProtKB-UniRule"/>
</dbReference>
<dbReference type="GO" id="GO:0030170">
    <property type="term" value="F:pyridoxal phosphate binding"/>
    <property type="evidence" value="ECO:0007669"/>
    <property type="project" value="UniProtKB-UniRule"/>
</dbReference>
<dbReference type="GO" id="GO:0006564">
    <property type="term" value="P:L-serine biosynthetic process"/>
    <property type="evidence" value="ECO:0007669"/>
    <property type="project" value="UniProtKB-UniRule"/>
</dbReference>
<dbReference type="GO" id="GO:0008615">
    <property type="term" value="P:pyridoxine biosynthetic process"/>
    <property type="evidence" value="ECO:0007669"/>
    <property type="project" value="UniProtKB-KW"/>
</dbReference>
<dbReference type="FunFam" id="3.40.640.10:FF:000010">
    <property type="entry name" value="Phosphoserine aminotransferase"/>
    <property type="match status" value="1"/>
</dbReference>
<dbReference type="FunFam" id="3.90.1150.10:FF:000006">
    <property type="entry name" value="Phosphoserine aminotransferase"/>
    <property type="match status" value="1"/>
</dbReference>
<dbReference type="Gene3D" id="3.90.1150.10">
    <property type="entry name" value="Aspartate Aminotransferase, domain 1"/>
    <property type="match status" value="1"/>
</dbReference>
<dbReference type="Gene3D" id="3.40.640.10">
    <property type="entry name" value="Type I PLP-dependent aspartate aminotransferase-like (Major domain)"/>
    <property type="match status" value="1"/>
</dbReference>
<dbReference type="HAMAP" id="MF_00160">
    <property type="entry name" value="SerC_aminotrans_5"/>
    <property type="match status" value="1"/>
</dbReference>
<dbReference type="InterPro" id="IPR000192">
    <property type="entry name" value="Aminotrans_V_dom"/>
</dbReference>
<dbReference type="InterPro" id="IPR022278">
    <property type="entry name" value="Pser_aminoTfrase"/>
</dbReference>
<dbReference type="InterPro" id="IPR015424">
    <property type="entry name" value="PyrdxlP-dep_Trfase"/>
</dbReference>
<dbReference type="InterPro" id="IPR015421">
    <property type="entry name" value="PyrdxlP-dep_Trfase_major"/>
</dbReference>
<dbReference type="InterPro" id="IPR015422">
    <property type="entry name" value="PyrdxlP-dep_Trfase_small"/>
</dbReference>
<dbReference type="NCBIfam" id="NF003764">
    <property type="entry name" value="PRK05355.1"/>
    <property type="match status" value="1"/>
</dbReference>
<dbReference type="NCBIfam" id="TIGR01364">
    <property type="entry name" value="serC_1"/>
    <property type="match status" value="1"/>
</dbReference>
<dbReference type="PANTHER" id="PTHR43247">
    <property type="entry name" value="PHOSPHOSERINE AMINOTRANSFERASE"/>
    <property type="match status" value="1"/>
</dbReference>
<dbReference type="PANTHER" id="PTHR43247:SF1">
    <property type="entry name" value="PHOSPHOSERINE AMINOTRANSFERASE"/>
    <property type="match status" value="1"/>
</dbReference>
<dbReference type="Pfam" id="PF00266">
    <property type="entry name" value="Aminotran_5"/>
    <property type="match status" value="1"/>
</dbReference>
<dbReference type="PIRSF" id="PIRSF000525">
    <property type="entry name" value="SerC"/>
    <property type="match status" value="1"/>
</dbReference>
<dbReference type="SUPFAM" id="SSF53383">
    <property type="entry name" value="PLP-dependent transferases"/>
    <property type="match status" value="1"/>
</dbReference>
<gene>
    <name evidence="1" type="primary">serC</name>
    <name type="ordered locus">stu1529</name>
</gene>
<sequence>MTIYNFSAGPATLPKPVLEKAQAELLNYQDSGMSVLEMSHRSPEFDKIIKDAEATLRELMAIPDNYKVIFLQGGASTQFTMVPLNLAQGKKAYYLVGGSWGKKAYTEAVKLSKTIPFEPILLASSEDTVYDHIPSFDPSTIDPEAAYVHLTTNNTIEGTSIYDLPDTNGVPIVAHMSSNILAARYNVEDFALIYAGAQKNIGPAGVTVVIVREDFLNDQPQLSAMLDYRIQAEAGSLYNTPPCFNIYISKLVFDWVKNEIGGVDKMAEIQREKSGLLYDYIESSDFYTNPVKDAKDRSVCNIPFVTPSKDLDAKFVAEADALGFKNIKGHRSVGGMRASVYNAFPRQGVLDLIDFMKKFEDENK</sequence>
<evidence type="ECO:0000255" key="1">
    <source>
        <dbReference type="HAMAP-Rule" id="MF_00160"/>
    </source>
</evidence>